<protein>
    <recommendedName>
        <fullName evidence="1">Small ribosomal subunit protein uS11</fullName>
    </recommendedName>
    <alternativeName>
        <fullName evidence="2">30S ribosomal protein S11</fullName>
    </alternativeName>
</protein>
<dbReference type="EMBL" id="CP000890">
    <property type="protein sequence ID" value="ABX78378.1"/>
    <property type="molecule type" value="Genomic_DNA"/>
</dbReference>
<dbReference type="RefSeq" id="WP_012220140.1">
    <property type="nucleotide sequence ID" value="NC_010117.1"/>
</dbReference>
<dbReference type="SMR" id="A9NAZ3"/>
<dbReference type="KEGG" id="cbs:COXBURSA331_A0360"/>
<dbReference type="HOGENOM" id="CLU_072439_5_0_6"/>
<dbReference type="GO" id="GO:1990904">
    <property type="term" value="C:ribonucleoprotein complex"/>
    <property type="evidence" value="ECO:0007669"/>
    <property type="project" value="UniProtKB-KW"/>
</dbReference>
<dbReference type="GO" id="GO:0005840">
    <property type="term" value="C:ribosome"/>
    <property type="evidence" value="ECO:0007669"/>
    <property type="project" value="UniProtKB-KW"/>
</dbReference>
<dbReference type="GO" id="GO:0019843">
    <property type="term" value="F:rRNA binding"/>
    <property type="evidence" value="ECO:0007669"/>
    <property type="project" value="UniProtKB-UniRule"/>
</dbReference>
<dbReference type="GO" id="GO:0003735">
    <property type="term" value="F:structural constituent of ribosome"/>
    <property type="evidence" value="ECO:0007669"/>
    <property type="project" value="InterPro"/>
</dbReference>
<dbReference type="GO" id="GO:0006412">
    <property type="term" value="P:translation"/>
    <property type="evidence" value="ECO:0007669"/>
    <property type="project" value="UniProtKB-UniRule"/>
</dbReference>
<dbReference type="FunFam" id="3.30.420.80:FF:000010">
    <property type="entry name" value="30S ribosomal protein S11"/>
    <property type="match status" value="1"/>
</dbReference>
<dbReference type="Gene3D" id="3.30.420.80">
    <property type="entry name" value="Ribosomal protein S11"/>
    <property type="match status" value="1"/>
</dbReference>
<dbReference type="HAMAP" id="MF_01310">
    <property type="entry name" value="Ribosomal_uS11"/>
    <property type="match status" value="1"/>
</dbReference>
<dbReference type="InterPro" id="IPR001971">
    <property type="entry name" value="Ribosomal_uS11"/>
</dbReference>
<dbReference type="InterPro" id="IPR019981">
    <property type="entry name" value="Ribosomal_uS11_bac-type"/>
</dbReference>
<dbReference type="InterPro" id="IPR018102">
    <property type="entry name" value="Ribosomal_uS11_CS"/>
</dbReference>
<dbReference type="InterPro" id="IPR036967">
    <property type="entry name" value="Ribosomal_uS11_sf"/>
</dbReference>
<dbReference type="NCBIfam" id="NF003698">
    <property type="entry name" value="PRK05309.1"/>
    <property type="match status" value="1"/>
</dbReference>
<dbReference type="NCBIfam" id="TIGR03632">
    <property type="entry name" value="uS11_bact"/>
    <property type="match status" value="1"/>
</dbReference>
<dbReference type="PANTHER" id="PTHR11759">
    <property type="entry name" value="40S RIBOSOMAL PROTEIN S14/30S RIBOSOMAL PROTEIN S11"/>
    <property type="match status" value="1"/>
</dbReference>
<dbReference type="Pfam" id="PF00411">
    <property type="entry name" value="Ribosomal_S11"/>
    <property type="match status" value="1"/>
</dbReference>
<dbReference type="PIRSF" id="PIRSF002131">
    <property type="entry name" value="Ribosomal_S11"/>
    <property type="match status" value="1"/>
</dbReference>
<dbReference type="SUPFAM" id="SSF53137">
    <property type="entry name" value="Translational machinery components"/>
    <property type="match status" value="1"/>
</dbReference>
<dbReference type="PROSITE" id="PS00054">
    <property type="entry name" value="RIBOSOMAL_S11"/>
    <property type="match status" value="1"/>
</dbReference>
<gene>
    <name evidence="1" type="primary">rpsK</name>
    <name type="ordered locus">COXBURSA331_A0360</name>
</gene>
<reference key="1">
    <citation type="submission" date="2007-11" db="EMBL/GenBank/DDBJ databases">
        <title>Genome sequencing of phylogenetically and phenotypically diverse Coxiella burnetii isolates.</title>
        <authorList>
            <person name="Seshadri R."/>
            <person name="Samuel J.E."/>
        </authorList>
    </citation>
    <scope>NUCLEOTIDE SEQUENCE [LARGE SCALE GENOMIC DNA]</scope>
    <source>
        <strain>RSA 331 / Henzerling II</strain>
    </source>
</reference>
<organism>
    <name type="scientific">Coxiella burnetii (strain RSA 331 / Henzerling II)</name>
    <dbReference type="NCBI Taxonomy" id="360115"/>
    <lineage>
        <taxon>Bacteria</taxon>
        <taxon>Pseudomonadati</taxon>
        <taxon>Pseudomonadota</taxon>
        <taxon>Gammaproteobacteria</taxon>
        <taxon>Legionellales</taxon>
        <taxon>Coxiellaceae</taxon>
        <taxon>Coxiella</taxon>
    </lineage>
</organism>
<sequence>MAKKRYRKVTEGIAHIKATFNNTMISVSDPQGNVLCFRSAGGSGFKGSRKGTPYGAQMASEEVGRLARDNFDMRRIAVRVKGPGAGRDSAIRGLRSAGLEVIYLEDRTPLPHNGCRPRKKRRV</sequence>
<keyword id="KW-0687">Ribonucleoprotein</keyword>
<keyword id="KW-0689">Ribosomal protein</keyword>
<keyword id="KW-0694">RNA-binding</keyword>
<keyword id="KW-0699">rRNA-binding</keyword>
<name>RS11_COXBR</name>
<accession>A9NAZ3</accession>
<proteinExistence type="inferred from homology"/>
<feature type="chain" id="PRO_1000086186" description="Small ribosomal subunit protein uS11">
    <location>
        <begin position="1"/>
        <end position="123"/>
    </location>
</feature>
<comment type="function">
    <text evidence="1">Located on the platform of the 30S subunit, it bridges several disparate RNA helices of the 16S rRNA. Forms part of the Shine-Dalgarno cleft in the 70S ribosome.</text>
</comment>
<comment type="subunit">
    <text evidence="1">Part of the 30S ribosomal subunit. Interacts with proteins S7 and S18. Binds to IF-3.</text>
</comment>
<comment type="similarity">
    <text evidence="1">Belongs to the universal ribosomal protein uS11 family.</text>
</comment>
<evidence type="ECO:0000255" key="1">
    <source>
        <dbReference type="HAMAP-Rule" id="MF_01310"/>
    </source>
</evidence>
<evidence type="ECO:0000305" key="2"/>